<dbReference type="EC" id="1.8.1.2" evidence="1"/>
<dbReference type="EMBL" id="CP000783">
    <property type="protein sequence ID" value="ABU75824.1"/>
    <property type="molecule type" value="Genomic_DNA"/>
</dbReference>
<dbReference type="RefSeq" id="WP_012123927.1">
    <property type="nucleotide sequence ID" value="NC_009778.1"/>
</dbReference>
<dbReference type="SMR" id="A7MJ63"/>
<dbReference type="KEGG" id="esa:ESA_00533"/>
<dbReference type="PATRIC" id="fig|290339.8.peg.478"/>
<dbReference type="HOGENOM" id="CLU_001570_17_7_6"/>
<dbReference type="UniPathway" id="UPA00140">
    <property type="reaction ID" value="UER00207"/>
</dbReference>
<dbReference type="Proteomes" id="UP000000260">
    <property type="component" value="Chromosome"/>
</dbReference>
<dbReference type="GO" id="GO:0005829">
    <property type="term" value="C:cytosol"/>
    <property type="evidence" value="ECO:0007669"/>
    <property type="project" value="TreeGrafter"/>
</dbReference>
<dbReference type="GO" id="GO:0050660">
    <property type="term" value="F:flavin adenine dinucleotide binding"/>
    <property type="evidence" value="ECO:0007669"/>
    <property type="project" value="InterPro"/>
</dbReference>
<dbReference type="GO" id="GO:0010181">
    <property type="term" value="F:FMN binding"/>
    <property type="evidence" value="ECO:0007669"/>
    <property type="project" value="InterPro"/>
</dbReference>
<dbReference type="GO" id="GO:0004783">
    <property type="term" value="F:sulfite reductase (NADPH) activity"/>
    <property type="evidence" value="ECO:0007669"/>
    <property type="project" value="UniProtKB-UniRule"/>
</dbReference>
<dbReference type="GO" id="GO:0019344">
    <property type="term" value="P:cysteine biosynthetic process"/>
    <property type="evidence" value="ECO:0007669"/>
    <property type="project" value="UniProtKB-KW"/>
</dbReference>
<dbReference type="GO" id="GO:0070814">
    <property type="term" value="P:hydrogen sulfide biosynthetic process"/>
    <property type="evidence" value="ECO:0007669"/>
    <property type="project" value="UniProtKB-UniRule"/>
</dbReference>
<dbReference type="GO" id="GO:0000103">
    <property type="term" value="P:sulfate assimilation"/>
    <property type="evidence" value="ECO:0007669"/>
    <property type="project" value="UniProtKB-UniRule"/>
</dbReference>
<dbReference type="CDD" id="cd06199">
    <property type="entry name" value="SiR"/>
    <property type="match status" value="1"/>
</dbReference>
<dbReference type="FunFam" id="3.40.50.80:FF:000001">
    <property type="entry name" value="NADPH--cytochrome P450 reductase 1"/>
    <property type="match status" value="1"/>
</dbReference>
<dbReference type="FunFam" id="1.20.990.10:FF:000004">
    <property type="entry name" value="Sulfite reductase [NADPH] flavoprotein alpha-component"/>
    <property type="match status" value="1"/>
</dbReference>
<dbReference type="FunFam" id="3.40.50.360:FF:000018">
    <property type="entry name" value="Sulfite reductase [NADPH] flavoprotein alpha-component"/>
    <property type="match status" value="1"/>
</dbReference>
<dbReference type="Gene3D" id="3.40.50.360">
    <property type="match status" value="1"/>
</dbReference>
<dbReference type="Gene3D" id="1.20.990.10">
    <property type="entry name" value="NADPH-cytochrome p450 Reductase, Chain A, domain 3"/>
    <property type="match status" value="1"/>
</dbReference>
<dbReference type="Gene3D" id="3.40.50.80">
    <property type="entry name" value="Nucleotide-binding domain of ferredoxin-NADP reductase (FNR) module"/>
    <property type="match status" value="1"/>
</dbReference>
<dbReference type="Gene3D" id="2.40.30.10">
    <property type="entry name" value="Translation factors"/>
    <property type="match status" value="1"/>
</dbReference>
<dbReference type="HAMAP" id="MF_01541">
    <property type="entry name" value="CysJ"/>
    <property type="match status" value="1"/>
</dbReference>
<dbReference type="InterPro" id="IPR010199">
    <property type="entry name" value="CysJ"/>
</dbReference>
<dbReference type="InterPro" id="IPR003097">
    <property type="entry name" value="CysJ-like_FAD-binding"/>
</dbReference>
<dbReference type="InterPro" id="IPR029758">
    <property type="entry name" value="CysJ_Proteobact"/>
</dbReference>
<dbReference type="InterPro" id="IPR017927">
    <property type="entry name" value="FAD-bd_FR_type"/>
</dbReference>
<dbReference type="InterPro" id="IPR001094">
    <property type="entry name" value="Flavdoxin-like"/>
</dbReference>
<dbReference type="InterPro" id="IPR008254">
    <property type="entry name" value="Flavodoxin/NO_synth"/>
</dbReference>
<dbReference type="InterPro" id="IPR001709">
    <property type="entry name" value="Flavoprot_Pyr_Nucl_cyt_Rdtase"/>
</dbReference>
<dbReference type="InterPro" id="IPR029039">
    <property type="entry name" value="Flavoprotein-like_sf"/>
</dbReference>
<dbReference type="InterPro" id="IPR039261">
    <property type="entry name" value="FNR_nucleotide-bd"/>
</dbReference>
<dbReference type="InterPro" id="IPR023173">
    <property type="entry name" value="NADPH_Cyt_P450_Rdtase_alpha"/>
</dbReference>
<dbReference type="InterPro" id="IPR001433">
    <property type="entry name" value="OxRdtase_FAD/NAD-bd"/>
</dbReference>
<dbReference type="InterPro" id="IPR017938">
    <property type="entry name" value="Riboflavin_synthase-like_b-brl"/>
</dbReference>
<dbReference type="NCBIfam" id="TIGR01931">
    <property type="entry name" value="cysJ"/>
    <property type="match status" value="1"/>
</dbReference>
<dbReference type="NCBIfam" id="NF004859">
    <property type="entry name" value="PRK06214.1"/>
    <property type="match status" value="1"/>
</dbReference>
<dbReference type="NCBIfam" id="NF008197">
    <property type="entry name" value="PRK10953.1"/>
    <property type="match status" value="1"/>
</dbReference>
<dbReference type="PANTHER" id="PTHR19384:SF128">
    <property type="entry name" value="NADPH OXIDOREDUCTASE A"/>
    <property type="match status" value="1"/>
</dbReference>
<dbReference type="PANTHER" id="PTHR19384">
    <property type="entry name" value="NITRIC OXIDE SYNTHASE-RELATED"/>
    <property type="match status" value="1"/>
</dbReference>
<dbReference type="Pfam" id="PF00667">
    <property type="entry name" value="FAD_binding_1"/>
    <property type="match status" value="1"/>
</dbReference>
<dbReference type="Pfam" id="PF00258">
    <property type="entry name" value="Flavodoxin_1"/>
    <property type="match status" value="1"/>
</dbReference>
<dbReference type="Pfam" id="PF00175">
    <property type="entry name" value="NAD_binding_1"/>
    <property type="match status" value="1"/>
</dbReference>
<dbReference type="PIRSF" id="PIRSF000207">
    <property type="entry name" value="SiR-FP_CysJ"/>
    <property type="match status" value="1"/>
</dbReference>
<dbReference type="PRINTS" id="PR00369">
    <property type="entry name" value="FLAVODOXIN"/>
</dbReference>
<dbReference type="PRINTS" id="PR00371">
    <property type="entry name" value="FPNCR"/>
</dbReference>
<dbReference type="SUPFAM" id="SSF52343">
    <property type="entry name" value="Ferredoxin reductase-like, C-terminal NADP-linked domain"/>
    <property type="match status" value="1"/>
</dbReference>
<dbReference type="SUPFAM" id="SSF52218">
    <property type="entry name" value="Flavoproteins"/>
    <property type="match status" value="1"/>
</dbReference>
<dbReference type="SUPFAM" id="SSF63380">
    <property type="entry name" value="Riboflavin synthase domain-like"/>
    <property type="match status" value="1"/>
</dbReference>
<dbReference type="PROSITE" id="PS51384">
    <property type="entry name" value="FAD_FR"/>
    <property type="match status" value="1"/>
</dbReference>
<dbReference type="PROSITE" id="PS50902">
    <property type="entry name" value="FLAVODOXIN_LIKE"/>
    <property type="match status" value="1"/>
</dbReference>
<name>CYSJ_CROS8</name>
<protein>
    <recommendedName>
        <fullName evidence="1">Sulfite reductase [NADPH] flavoprotein alpha-component</fullName>
        <shortName evidence="1">SiR-FP</shortName>
        <ecNumber evidence="1">1.8.1.2</ecNumber>
    </recommendedName>
</protein>
<comment type="function">
    <text evidence="1">Component of the sulfite reductase complex that catalyzes the 6-electron reduction of sulfite to sulfide. This is one of several activities required for the biosynthesis of L-cysteine from sulfate. The flavoprotein component catalyzes the electron flow from NADPH -&gt; FAD -&gt; FMN to the hemoprotein component.</text>
</comment>
<comment type="catalytic activity">
    <reaction evidence="1">
        <text>hydrogen sulfide + 3 NADP(+) + 3 H2O = sulfite + 3 NADPH + 4 H(+)</text>
        <dbReference type="Rhea" id="RHEA:13801"/>
        <dbReference type="ChEBI" id="CHEBI:15377"/>
        <dbReference type="ChEBI" id="CHEBI:15378"/>
        <dbReference type="ChEBI" id="CHEBI:17359"/>
        <dbReference type="ChEBI" id="CHEBI:29919"/>
        <dbReference type="ChEBI" id="CHEBI:57783"/>
        <dbReference type="ChEBI" id="CHEBI:58349"/>
        <dbReference type="EC" id="1.8.1.2"/>
    </reaction>
</comment>
<comment type="cofactor">
    <cofactor evidence="1">
        <name>FAD</name>
        <dbReference type="ChEBI" id="CHEBI:57692"/>
    </cofactor>
    <text evidence="1">Binds 1 FAD per subunit.</text>
</comment>
<comment type="cofactor">
    <cofactor evidence="1">
        <name>FMN</name>
        <dbReference type="ChEBI" id="CHEBI:58210"/>
    </cofactor>
    <text evidence="1">Binds 1 FMN per subunit.</text>
</comment>
<comment type="pathway">
    <text evidence="1">Sulfur metabolism; hydrogen sulfide biosynthesis; hydrogen sulfide from sulfite (NADPH route): step 1/1.</text>
</comment>
<comment type="subunit">
    <text evidence="1">Alpha(8)-beta(8). The alpha component is a flavoprotein, the beta component is a hemoprotein.</text>
</comment>
<comment type="similarity">
    <text evidence="1">Belongs to the NADPH-dependent sulphite reductase flavoprotein subunit CysJ family.</text>
</comment>
<comment type="similarity">
    <text evidence="1">In the N-terminal section; belongs to the flavodoxin family.</text>
</comment>
<comment type="similarity">
    <text evidence="1">In the C-terminal section; belongs to the flavoprotein pyridine nucleotide cytochrome reductase family.</text>
</comment>
<evidence type="ECO:0000255" key="1">
    <source>
        <dbReference type="HAMAP-Rule" id="MF_01541"/>
    </source>
</evidence>
<reference key="1">
    <citation type="journal article" date="2010" name="PLoS ONE">
        <title>Genome sequence of Cronobacter sakazakii BAA-894 and comparative genomic hybridization analysis with other Cronobacter species.</title>
        <authorList>
            <person name="Kucerova E."/>
            <person name="Clifton S.W."/>
            <person name="Xia X.Q."/>
            <person name="Long F."/>
            <person name="Porwollik S."/>
            <person name="Fulton L."/>
            <person name="Fronick C."/>
            <person name="Minx P."/>
            <person name="Kyung K."/>
            <person name="Warren W."/>
            <person name="Fulton R."/>
            <person name="Feng D."/>
            <person name="Wollam A."/>
            <person name="Shah N."/>
            <person name="Bhonagiri V."/>
            <person name="Nash W.E."/>
            <person name="Hallsworth-Pepin K."/>
            <person name="Wilson R.K."/>
            <person name="McClelland M."/>
            <person name="Forsythe S.J."/>
        </authorList>
    </citation>
    <scope>NUCLEOTIDE SEQUENCE [LARGE SCALE GENOMIC DNA]</scope>
    <source>
        <strain>ATCC BAA-894</strain>
    </source>
</reference>
<organism>
    <name type="scientific">Cronobacter sakazakii (strain ATCC BAA-894)</name>
    <name type="common">Enterobacter sakazakii</name>
    <dbReference type="NCBI Taxonomy" id="290339"/>
    <lineage>
        <taxon>Bacteria</taxon>
        <taxon>Pseudomonadati</taxon>
        <taxon>Pseudomonadota</taxon>
        <taxon>Gammaproteobacteria</taxon>
        <taxon>Enterobacterales</taxon>
        <taxon>Enterobacteriaceae</taxon>
        <taxon>Cronobacter</taxon>
    </lineage>
</organism>
<feature type="chain" id="PRO_1000087636" description="Sulfite reductase [NADPH] flavoprotein alpha-component">
    <location>
        <begin position="1"/>
        <end position="600"/>
    </location>
</feature>
<feature type="domain" description="Flavodoxin-like" evidence="1">
    <location>
        <begin position="63"/>
        <end position="201"/>
    </location>
</feature>
<feature type="domain" description="FAD-binding FR-type" evidence="1">
    <location>
        <begin position="235"/>
        <end position="449"/>
    </location>
</feature>
<feature type="binding site" evidence="1">
    <location>
        <begin position="69"/>
        <end position="74"/>
    </location>
    <ligand>
        <name>FMN</name>
        <dbReference type="ChEBI" id="CHEBI:58210"/>
    </ligand>
</feature>
<feature type="binding site" evidence="1">
    <location>
        <begin position="116"/>
        <end position="119"/>
    </location>
    <ligand>
        <name>FMN</name>
        <dbReference type="ChEBI" id="CHEBI:58210"/>
    </ligand>
</feature>
<feature type="binding site" evidence="1">
    <location>
        <begin position="152"/>
        <end position="161"/>
    </location>
    <ligand>
        <name>FMN</name>
        <dbReference type="ChEBI" id="CHEBI:58210"/>
    </ligand>
</feature>
<feature type="binding site" evidence="1">
    <location>
        <position position="323"/>
    </location>
    <ligand>
        <name>FAD</name>
        <dbReference type="ChEBI" id="CHEBI:57692"/>
    </ligand>
</feature>
<feature type="binding site" evidence="1">
    <location>
        <position position="357"/>
    </location>
    <ligand>
        <name>FAD</name>
        <dbReference type="ChEBI" id="CHEBI:57692"/>
    </ligand>
</feature>
<feature type="binding site" evidence="1">
    <location>
        <begin position="387"/>
        <end position="390"/>
    </location>
    <ligand>
        <name>FAD</name>
        <dbReference type="ChEBI" id="CHEBI:57692"/>
    </ligand>
</feature>
<feature type="binding site" evidence="1">
    <location>
        <begin position="405"/>
        <end position="407"/>
    </location>
    <ligand>
        <name>FAD</name>
        <dbReference type="ChEBI" id="CHEBI:57692"/>
    </ligand>
</feature>
<feature type="binding site" evidence="1">
    <location>
        <begin position="420"/>
        <end position="423"/>
    </location>
    <ligand>
        <name>FAD</name>
        <dbReference type="ChEBI" id="CHEBI:57692"/>
    </ligand>
</feature>
<feature type="binding site" evidence="1">
    <location>
        <begin position="520"/>
        <end position="521"/>
    </location>
    <ligand>
        <name>NADP(+)</name>
        <dbReference type="ChEBI" id="CHEBI:58349"/>
    </ligand>
</feature>
<feature type="binding site" evidence="1">
    <location>
        <begin position="526"/>
        <end position="530"/>
    </location>
    <ligand>
        <name>NADP(+)</name>
        <dbReference type="ChEBI" id="CHEBI:58349"/>
    </ligand>
</feature>
<feature type="binding site" evidence="1">
    <location>
        <position position="562"/>
    </location>
    <ligand>
        <name>NADP(+)</name>
        <dbReference type="ChEBI" id="CHEBI:58349"/>
    </ligand>
</feature>
<feature type="binding site" evidence="1">
    <location>
        <position position="600"/>
    </location>
    <ligand>
        <name>FAD</name>
        <dbReference type="ChEBI" id="CHEBI:57692"/>
    </ligand>
</feature>
<sequence length="600" mass="66548">MTTQAPPNALLPLSPEQLARLQTATHDFTPTQLAWLSGYFWGMVNQQPGAAVMQKPAAPASVITLISASQTGNARRVAEALRDDLLAAQLNVNLVNAGDYKFKQIAQEKLLIVVASTQGEGDPPEEAVALHKFLLSKKAPKLDGTAFAVFGLGDTSYEHFCQAGKDFDTRLAELGAERLLDRVDADVEYQAAAQAWRQRVVDVLKARVPKEAPSQAAITASGAVNLVDSTPYTKESPLTATLSVNQKITGRHSEKDVRHIEIDLGDAGLRYQPGDALGVWYQNDPALVQELLELLWLKGDEPVTVGEKTLPLSEALQWHFELTVNTAAIVENYATLTRSEALLPLVGDKAKLQDYAARTPIVDMVRFAPAQLEADQLLGLLRPLTPRLYSIASSQAEVENEVHITVGVVRFDIEGRVRAGGASSYLADRLEEDSEVRVFIEHNDNFRLPATPETPVIMIGPGTGIAPFRAFMQQREADGATGKNWLFFGNPHFTEDFLYQVEWQRYVKEGLLTRIDLAWSRDQDHKIYVQDKIREQGAELWRWLQEGAHLYVCGDANRMAKDVEQALLEVIAAYGGMDAEAADEYLSELRVERRYQRDVY</sequence>
<gene>
    <name evidence="1" type="primary">cysJ</name>
    <name type="ordered locus">ESA_00533</name>
</gene>
<keyword id="KW-0028">Amino-acid biosynthesis</keyword>
<keyword id="KW-0198">Cysteine biosynthesis</keyword>
<keyword id="KW-0249">Electron transport</keyword>
<keyword id="KW-0274">FAD</keyword>
<keyword id="KW-0285">Flavoprotein</keyword>
<keyword id="KW-0288">FMN</keyword>
<keyword id="KW-0521">NADP</keyword>
<keyword id="KW-0560">Oxidoreductase</keyword>
<keyword id="KW-1185">Reference proteome</keyword>
<keyword id="KW-0813">Transport</keyword>
<proteinExistence type="inferred from homology"/>
<accession>A7MJ63</accession>